<accession>O32848</accession>
<reference key="1">
    <citation type="submission" date="1998-01" db="EMBL/GenBank/DDBJ databases">
        <title>Mycobacterium avium glyceraldhyde-3-phosphate dehydrogenase homolog.</title>
        <authorList>
            <person name="Parker A.E."/>
            <person name="Bermudez L.E."/>
        </authorList>
    </citation>
    <scope>NUCLEOTIDE SEQUENCE [GENOMIC DNA]</scope>
    <source>
        <strain>101</strain>
    </source>
</reference>
<dbReference type="EC" id="2.7.2.3"/>
<dbReference type="EMBL" id="U82749">
    <property type="protein sequence ID" value="AAB95085.1"/>
    <property type="molecule type" value="Genomic_DNA"/>
</dbReference>
<dbReference type="SMR" id="O32848"/>
<dbReference type="UniPathway" id="UPA00109">
    <property type="reaction ID" value="UER00185"/>
</dbReference>
<dbReference type="GO" id="GO:0005829">
    <property type="term" value="C:cytosol"/>
    <property type="evidence" value="ECO:0007669"/>
    <property type="project" value="TreeGrafter"/>
</dbReference>
<dbReference type="GO" id="GO:0043531">
    <property type="term" value="F:ADP binding"/>
    <property type="evidence" value="ECO:0007669"/>
    <property type="project" value="TreeGrafter"/>
</dbReference>
<dbReference type="GO" id="GO:0005524">
    <property type="term" value="F:ATP binding"/>
    <property type="evidence" value="ECO:0007669"/>
    <property type="project" value="UniProtKB-KW"/>
</dbReference>
<dbReference type="GO" id="GO:0004618">
    <property type="term" value="F:phosphoglycerate kinase activity"/>
    <property type="evidence" value="ECO:0007669"/>
    <property type="project" value="UniProtKB-EC"/>
</dbReference>
<dbReference type="GO" id="GO:0006094">
    <property type="term" value="P:gluconeogenesis"/>
    <property type="evidence" value="ECO:0007669"/>
    <property type="project" value="TreeGrafter"/>
</dbReference>
<dbReference type="GO" id="GO:0006096">
    <property type="term" value="P:glycolytic process"/>
    <property type="evidence" value="ECO:0007669"/>
    <property type="project" value="UniProtKB-UniPathway"/>
</dbReference>
<dbReference type="FunFam" id="3.40.50.1260:FF:000031">
    <property type="entry name" value="Phosphoglycerate kinase 1"/>
    <property type="match status" value="1"/>
</dbReference>
<dbReference type="Gene3D" id="3.40.50.1260">
    <property type="entry name" value="Phosphoglycerate kinase, N-terminal domain"/>
    <property type="match status" value="2"/>
</dbReference>
<dbReference type="InterPro" id="IPR001576">
    <property type="entry name" value="Phosphoglycerate_kinase"/>
</dbReference>
<dbReference type="InterPro" id="IPR015911">
    <property type="entry name" value="Phosphoglycerate_kinase_CS"/>
</dbReference>
<dbReference type="InterPro" id="IPR015824">
    <property type="entry name" value="Phosphoglycerate_kinase_N"/>
</dbReference>
<dbReference type="InterPro" id="IPR036043">
    <property type="entry name" value="Phosphoglycerate_kinase_sf"/>
</dbReference>
<dbReference type="PANTHER" id="PTHR11406">
    <property type="entry name" value="PHOSPHOGLYCERATE KINASE"/>
    <property type="match status" value="1"/>
</dbReference>
<dbReference type="PANTHER" id="PTHR11406:SF23">
    <property type="entry name" value="PHOSPHOGLYCERATE KINASE 1, CHLOROPLASTIC-RELATED"/>
    <property type="match status" value="1"/>
</dbReference>
<dbReference type="Pfam" id="PF00162">
    <property type="entry name" value="PGK"/>
    <property type="match status" value="1"/>
</dbReference>
<dbReference type="PRINTS" id="PR00477">
    <property type="entry name" value="PHGLYCKINASE"/>
</dbReference>
<dbReference type="SUPFAM" id="SSF53748">
    <property type="entry name" value="Phosphoglycerate kinase"/>
    <property type="match status" value="1"/>
</dbReference>
<dbReference type="PROSITE" id="PS00111">
    <property type="entry name" value="PGLYCERATE_KINASE"/>
    <property type="match status" value="1"/>
</dbReference>
<organism>
    <name type="scientific">Mycobacterium avium</name>
    <dbReference type="NCBI Taxonomy" id="1764"/>
    <lineage>
        <taxon>Bacteria</taxon>
        <taxon>Bacillati</taxon>
        <taxon>Actinomycetota</taxon>
        <taxon>Actinomycetes</taxon>
        <taxon>Mycobacteriales</taxon>
        <taxon>Mycobacteriaceae</taxon>
        <taxon>Mycobacterium</taxon>
        <taxon>Mycobacterium avium complex (MAC)</taxon>
    </lineage>
</organism>
<name>PGK_MYCAV</name>
<evidence type="ECO:0000250" key="1"/>
<evidence type="ECO:0000256" key="2">
    <source>
        <dbReference type="SAM" id="MobiDB-lite"/>
    </source>
</evidence>
<evidence type="ECO:0000305" key="3"/>
<comment type="catalytic activity">
    <reaction>
        <text>(2R)-3-phosphoglycerate + ATP = (2R)-3-phospho-glyceroyl phosphate + ADP</text>
        <dbReference type="Rhea" id="RHEA:14801"/>
        <dbReference type="ChEBI" id="CHEBI:30616"/>
        <dbReference type="ChEBI" id="CHEBI:57604"/>
        <dbReference type="ChEBI" id="CHEBI:58272"/>
        <dbReference type="ChEBI" id="CHEBI:456216"/>
        <dbReference type="EC" id="2.7.2.3"/>
    </reaction>
</comment>
<comment type="pathway">
    <text>Carbohydrate degradation; glycolysis; pyruvate from D-glyceraldehyde 3-phosphate: step 2/5.</text>
</comment>
<comment type="subunit">
    <text evidence="1">Monomer.</text>
</comment>
<comment type="subcellular location">
    <subcellularLocation>
        <location evidence="3">Cytoplasm</location>
    </subcellularLocation>
</comment>
<comment type="similarity">
    <text evidence="3">Belongs to the phosphoglycerate kinase family.</text>
</comment>
<sequence length="388" mass="40379">MAVHNLKDLLAEGVSGRGVLVRSDLNVPLDSDGEQGRITDPGPDHRVGADVERTGRGGRQGGGRRAPRASQEWAGPGVVAGPGGRRARRAAGPARAAGLGRGGHRRPGPRRGVDRRRRPAAGKHPVRRPRNVQGRRRAARAGRQMAELVGPTGAFVSDGFGVVHRKQASVYDVATLLPHYAGTLVAEEIAVLEQLTGSTKRPYAVVLGGSKVSDKLGVIESLATKADSIVIGGGMCFTFLAAQGFSVGKSLVETEMVDTCRRLLDTYVDVLRLPVDMVAADRLAADAAPQTVPADAIPDDLMGVDIGPGSVKRFTALLSNAETMFWNGPMGVFEFPAFAAGTKGLAEAIAAATGKGAFSVVGGGDSAAATAVELQLLFPLVRLIARLA</sequence>
<proteinExistence type="inferred from homology"/>
<feature type="chain" id="PRO_0000145963" description="Phosphoglycerate kinase">
    <location>
        <begin position="1"/>
        <end position="388" status="greater than"/>
    </location>
</feature>
<feature type="region of interest" description="Disordered" evidence="2">
    <location>
        <begin position="26"/>
        <end position="136"/>
    </location>
</feature>
<feature type="compositionally biased region" description="Basic and acidic residues" evidence="2">
    <location>
        <begin position="34"/>
        <end position="55"/>
    </location>
</feature>
<feature type="compositionally biased region" description="Basic residues" evidence="2">
    <location>
        <begin position="102"/>
        <end position="136"/>
    </location>
</feature>
<feature type="binding site" evidence="1">
    <location>
        <begin position="24"/>
        <end position="26"/>
    </location>
    <ligand>
        <name>substrate</name>
    </ligand>
</feature>
<feature type="binding site" evidence="1">
    <location>
        <position position="37"/>
    </location>
    <ligand>
        <name>substrate</name>
    </ligand>
</feature>
<feature type="binding site" evidence="1">
    <location>
        <begin position="56"/>
        <end position="59"/>
    </location>
    <ligand>
        <name>substrate</name>
    </ligand>
</feature>
<feature type="binding site" evidence="1">
    <location>
        <position position="117"/>
    </location>
    <ligand>
        <name>substrate</name>
    </ligand>
</feature>
<feature type="binding site" evidence="1">
    <location>
        <position position="165"/>
    </location>
    <ligand>
        <name>substrate</name>
    </ligand>
</feature>
<feature type="binding site" evidence="1">
    <location>
        <position position="215"/>
    </location>
    <ligand>
        <name>ATP</name>
        <dbReference type="ChEBI" id="CHEBI:30616"/>
    </ligand>
</feature>
<feature type="binding site" evidence="1">
    <location>
        <position position="303"/>
    </location>
    <ligand>
        <name>ATP</name>
        <dbReference type="ChEBI" id="CHEBI:30616"/>
    </ligand>
</feature>
<feature type="binding site" evidence="1">
    <location>
        <position position="334"/>
    </location>
    <ligand>
        <name>ATP</name>
        <dbReference type="ChEBI" id="CHEBI:30616"/>
    </ligand>
</feature>
<feature type="binding site" evidence="1">
    <location>
        <begin position="363"/>
        <end position="366"/>
    </location>
    <ligand>
        <name>ATP</name>
        <dbReference type="ChEBI" id="CHEBI:30616"/>
    </ligand>
</feature>
<feature type="non-terminal residue">
    <location>
        <position position="388"/>
    </location>
</feature>
<keyword id="KW-0067">ATP-binding</keyword>
<keyword id="KW-0963">Cytoplasm</keyword>
<keyword id="KW-0324">Glycolysis</keyword>
<keyword id="KW-0418">Kinase</keyword>
<keyword id="KW-0547">Nucleotide-binding</keyword>
<keyword id="KW-0808">Transferase</keyword>
<gene>
    <name type="primary">pgk</name>
</gene>
<protein>
    <recommendedName>
        <fullName>Phosphoglycerate kinase</fullName>
        <ecNumber>2.7.2.3</ecNumber>
    </recommendedName>
</protein>